<organism>
    <name type="scientific">Psychromonas ingrahamii (strain DSM 17664 / CCUG 51855 / 37)</name>
    <dbReference type="NCBI Taxonomy" id="357804"/>
    <lineage>
        <taxon>Bacteria</taxon>
        <taxon>Pseudomonadati</taxon>
        <taxon>Pseudomonadota</taxon>
        <taxon>Gammaproteobacteria</taxon>
        <taxon>Alteromonadales</taxon>
        <taxon>Psychromonadaceae</taxon>
        <taxon>Psychromonas</taxon>
    </lineage>
</organism>
<comment type="function">
    <text evidence="1">With CysN forms the ATP sulfurylase (ATPS) that catalyzes the adenylation of sulfate producing adenosine 5'-phosphosulfate (APS) and diphosphate, the first enzymatic step in sulfur assimilation pathway. APS synthesis involves the formation of a high-energy phosphoric-sulfuric acid anhydride bond driven by GTP hydrolysis by CysN coupled to ATP hydrolysis by CysD.</text>
</comment>
<comment type="catalytic activity">
    <reaction evidence="1">
        <text>sulfate + ATP + H(+) = adenosine 5'-phosphosulfate + diphosphate</text>
        <dbReference type="Rhea" id="RHEA:18133"/>
        <dbReference type="ChEBI" id="CHEBI:15378"/>
        <dbReference type="ChEBI" id="CHEBI:16189"/>
        <dbReference type="ChEBI" id="CHEBI:30616"/>
        <dbReference type="ChEBI" id="CHEBI:33019"/>
        <dbReference type="ChEBI" id="CHEBI:58243"/>
        <dbReference type="EC" id="2.7.7.4"/>
    </reaction>
</comment>
<comment type="pathway">
    <text evidence="1">Sulfur metabolism; hydrogen sulfide biosynthesis; sulfite from sulfate: step 1/3.</text>
</comment>
<comment type="subunit">
    <text evidence="1">Heterodimer composed of CysD, the smaller subunit, and CysN.</text>
</comment>
<comment type="similarity">
    <text evidence="1">Belongs to the PAPS reductase family. CysD subfamily.</text>
</comment>
<reference key="1">
    <citation type="journal article" date="2008" name="BMC Genomics">
        <title>Genomics of an extreme psychrophile, Psychromonas ingrahamii.</title>
        <authorList>
            <person name="Riley M."/>
            <person name="Staley J.T."/>
            <person name="Danchin A."/>
            <person name="Wang T.Z."/>
            <person name="Brettin T.S."/>
            <person name="Hauser L.J."/>
            <person name="Land M.L."/>
            <person name="Thompson L.S."/>
        </authorList>
    </citation>
    <scope>NUCLEOTIDE SEQUENCE [LARGE SCALE GENOMIC DNA]</scope>
    <source>
        <strain>DSM 17664 / CCUG 51855 / 37</strain>
    </source>
</reference>
<protein>
    <recommendedName>
        <fullName evidence="1">Sulfate adenylyltransferase subunit 2</fullName>
        <ecNumber evidence="1">2.7.7.4</ecNumber>
    </recommendedName>
    <alternativeName>
        <fullName evidence="1">ATP-sulfurylase small subunit</fullName>
    </alternativeName>
    <alternativeName>
        <fullName evidence="1">Sulfate adenylate transferase</fullName>
        <shortName evidence="1">SAT</shortName>
    </alternativeName>
</protein>
<accession>A1ST25</accession>
<evidence type="ECO:0000255" key="1">
    <source>
        <dbReference type="HAMAP-Rule" id="MF_00064"/>
    </source>
</evidence>
<proteinExistence type="inferred from homology"/>
<dbReference type="EC" id="2.7.7.4" evidence="1"/>
<dbReference type="EMBL" id="CP000510">
    <property type="protein sequence ID" value="ABM02640.1"/>
    <property type="molecule type" value="Genomic_DNA"/>
</dbReference>
<dbReference type="RefSeq" id="WP_011769203.1">
    <property type="nucleotide sequence ID" value="NC_008709.1"/>
</dbReference>
<dbReference type="SMR" id="A1ST25"/>
<dbReference type="STRING" id="357804.Ping_0796"/>
<dbReference type="KEGG" id="pin:Ping_0796"/>
<dbReference type="eggNOG" id="COG0175">
    <property type="taxonomic scope" value="Bacteria"/>
</dbReference>
<dbReference type="HOGENOM" id="CLU_043026_0_0_6"/>
<dbReference type="OrthoDB" id="9772604at2"/>
<dbReference type="UniPathway" id="UPA00140">
    <property type="reaction ID" value="UER00204"/>
</dbReference>
<dbReference type="Proteomes" id="UP000000639">
    <property type="component" value="Chromosome"/>
</dbReference>
<dbReference type="GO" id="GO:0005524">
    <property type="term" value="F:ATP binding"/>
    <property type="evidence" value="ECO:0007669"/>
    <property type="project" value="UniProtKB-KW"/>
</dbReference>
<dbReference type="GO" id="GO:0004781">
    <property type="term" value="F:sulfate adenylyltransferase (ATP) activity"/>
    <property type="evidence" value="ECO:0007669"/>
    <property type="project" value="UniProtKB-UniRule"/>
</dbReference>
<dbReference type="GO" id="GO:0070814">
    <property type="term" value="P:hydrogen sulfide biosynthetic process"/>
    <property type="evidence" value="ECO:0007669"/>
    <property type="project" value="UniProtKB-UniRule"/>
</dbReference>
<dbReference type="GO" id="GO:0000103">
    <property type="term" value="P:sulfate assimilation"/>
    <property type="evidence" value="ECO:0007669"/>
    <property type="project" value="UniProtKB-UniRule"/>
</dbReference>
<dbReference type="CDD" id="cd23946">
    <property type="entry name" value="Sulfate_adenylyltransferase_2"/>
    <property type="match status" value="1"/>
</dbReference>
<dbReference type="FunFam" id="3.40.50.620:FF:000002">
    <property type="entry name" value="Sulfate adenylyltransferase subunit 2"/>
    <property type="match status" value="1"/>
</dbReference>
<dbReference type="Gene3D" id="3.40.50.620">
    <property type="entry name" value="HUPs"/>
    <property type="match status" value="1"/>
</dbReference>
<dbReference type="HAMAP" id="MF_00064">
    <property type="entry name" value="Sulf_adenylyltr_sub2"/>
    <property type="match status" value="1"/>
</dbReference>
<dbReference type="InterPro" id="IPR002500">
    <property type="entry name" value="PAPS_reduct_dom"/>
</dbReference>
<dbReference type="InterPro" id="IPR014729">
    <property type="entry name" value="Rossmann-like_a/b/a_fold"/>
</dbReference>
<dbReference type="InterPro" id="IPR011784">
    <property type="entry name" value="SO4_adenylTrfase_ssu"/>
</dbReference>
<dbReference type="InterPro" id="IPR050128">
    <property type="entry name" value="Sulfate_adenylyltrnsfr_sub2"/>
</dbReference>
<dbReference type="NCBIfam" id="TIGR02039">
    <property type="entry name" value="CysD"/>
    <property type="match status" value="1"/>
</dbReference>
<dbReference type="NCBIfam" id="NF003587">
    <property type="entry name" value="PRK05253.1"/>
    <property type="match status" value="1"/>
</dbReference>
<dbReference type="NCBIfam" id="NF009214">
    <property type="entry name" value="PRK12563.1"/>
    <property type="match status" value="1"/>
</dbReference>
<dbReference type="PANTHER" id="PTHR43196">
    <property type="entry name" value="SULFATE ADENYLYLTRANSFERASE SUBUNIT 2"/>
    <property type="match status" value="1"/>
</dbReference>
<dbReference type="PANTHER" id="PTHR43196:SF1">
    <property type="entry name" value="SULFATE ADENYLYLTRANSFERASE SUBUNIT 2"/>
    <property type="match status" value="1"/>
</dbReference>
<dbReference type="Pfam" id="PF01507">
    <property type="entry name" value="PAPS_reduct"/>
    <property type="match status" value="1"/>
</dbReference>
<dbReference type="PIRSF" id="PIRSF002936">
    <property type="entry name" value="CysDAde_trans"/>
    <property type="match status" value="1"/>
</dbReference>
<dbReference type="SUPFAM" id="SSF52402">
    <property type="entry name" value="Adenine nucleotide alpha hydrolases-like"/>
    <property type="match status" value="1"/>
</dbReference>
<keyword id="KW-0067">ATP-binding</keyword>
<keyword id="KW-0547">Nucleotide-binding</keyword>
<keyword id="KW-0548">Nucleotidyltransferase</keyword>
<keyword id="KW-1185">Reference proteome</keyword>
<keyword id="KW-0808">Transferase</keyword>
<gene>
    <name evidence="1" type="primary">cysD</name>
    <name type="ordered locus">Ping_0796</name>
</gene>
<sequence>MKKNRLTHLKALEAESIQIMREVAAEFDNPVMLYSVGKDSSVLLHLARKAFYPGKIPFPLLHVDTNWKFKEMIAFRDNIAKKYDFDLLVHKNPRGMEMGISPFEHGSAKHTDIMKTEGLKQALDKYGFDAAFGGARRDEEKSRAKERVYSFRDKKHRWDPKNQRPELWNIYNAKVDRGESIRVFPLSNWTELDIWQYIYQEDIEMVPLYFAKKRPVVERDGALIMVDDERMPLKEGEVPEMKMVRFRTLGCYPLTGAIESQATTLPEIIQEMLLTTTSERQGRVIDNDSAGSMEKKKMEGYF</sequence>
<feature type="chain" id="PRO_1000008975" description="Sulfate adenylyltransferase subunit 2">
    <location>
        <begin position="1"/>
        <end position="302"/>
    </location>
</feature>
<name>CYSD_PSYIN</name>